<reference key="1">
    <citation type="journal article" date="2000" name="Nature">
        <title>Complete genome sequence of Pseudomonas aeruginosa PAO1, an opportunistic pathogen.</title>
        <authorList>
            <person name="Stover C.K."/>
            <person name="Pham X.-Q.T."/>
            <person name="Erwin A.L."/>
            <person name="Mizoguchi S.D."/>
            <person name="Warrener P."/>
            <person name="Hickey M.J."/>
            <person name="Brinkman F.S.L."/>
            <person name="Hufnagle W.O."/>
            <person name="Kowalik D.J."/>
            <person name="Lagrou M."/>
            <person name="Garber R.L."/>
            <person name="Goltry L."/>
            <person name="Tolentino E."/>
            <person name="Westbrock-Wadman S."/>
            <person name="Yuan Y."/>
            <person name="Brody L.L."/>
            <person name="Coulter S.N."/>
            <person name="Folger K.R."/>
            <person name="Kas A."/>
            <person name="Larbig K."/>
            <person name="Lim R.M."/>
            <person name="Smith K.A."/>
            <person name="Spencer D.H."/>
            <person name="Wong G.K.-S."/>
            <person name="Wu Z."/>
            <person name="Paulsen I.T."/>
            <person name="Reizer J."/>
            <person name="Saier M.H. Jr."/>
            <person name="Hancock R.E.W."/>
            <person name="Lory S."/>
            <person name="Olson M.V."/>
        </authorList>
    </citation>
    <scope>NUCLEOTIDE SEQUENCE [LARGE SCALE GENOMIC DNA]</scope>
    <source>
        <strain>ATCC 15692 / DSM 22644 / CIP 104116 / JCM 14847 / LMG 12228 / 1C / PRS 101 / PAO1</strain>
    </source>
</reference>
<keyword id="KW-1015">Disulfide bond</keyword>
<keyword id="KW-0574">Periplasm</keyword>
<keyword id="KW-1185">Reference proteome</keyword>
<keyword id="KW-0732">Signal</keyword>
<sequence>MRLMRNLMNALLLGAAASSLAVAADRDGEYRLNELQSTDAGYRKAWQNLVEDESRLPDWVMNLSGTATPMHAVDDQGDKYLVGGLCEKSDCKGQRLLVAFDWDKSHAYGLYVQVPEGLPQDKSPSKHASFRWLGKPEPAVQKILDEQLKADPNWY</sequence>
<protein>
    <recommendedName>
        <fullName>Uncharacterized protein PA5481</fullName>
    </recommendedName>
</protein>
<organism>
    <name type="scientific">Pseudomonas aeruginosa (strain ATCC 15692 / DSM 22644 / CIP 104116 / JCM 14847 / LMG 12228 / 1C / PRS 101 / PAO1)</name>
    <dbReference type="NCBI Taxonomy" id="208964"/>
    <lineage>
        <taxon>Bacteria</taxon>
        <taxon>Pseudomonadati</taxon>
        <taxon>Pseudomonadota</taxon>
        <taxon>Gammaproteobacteria</taxon>
        <taxon>Pseudomonadales</taxon>
        <taxon>Pseudomonadaceae</taxon>
        <taxon>Pseudomonas</taxon>
    </lineage>
</organism>
<evidence type="ECO:0000250" key="1"/>
<evidence type="ECO:0000255" key="2"/>
<evidence type="ECO:0000305" key="3"/>
<proteinExistence type="inferred from homology"/>
<comment type="subcellular location">
    <subcellularLocation>
        <location evidence="3">Periplasm</location>
    </subcellularLocation>
</comment>
<comment type="similarity">
    <text evidence="3">Belongs to the ivy family.</text>
</comment>
<accession>Q9HT89</accession>
<dbReference type="EMBL" id="AE004091">
    <property type="protein sequence ID" value="AAG08866.1"/>
    <property type="molecule type" value="Genomic_DNA"/>
</dbReference>
<dbReference type="PIR" id="H82959">
    <property type="entry name" value="H82959"/>
</dbReference>
<dbReference type="RefSeq" id="NP_254168.1">
    <property type="nucleotide sequence ID" value="NC_002516.2"/>
</dbReference>
<dbReference type="RefSeq" id="WP_003114119.1">
    <property type="nucleotide sequence ID" value="NZ_QZGE01000012.1"/>
</dbReference>
<dbReference type="SMR" id="Q9HT89"/>
<dbReference type="FunCoup" id="Q9HT89">
    <property type="interactions" value="48"/>
</dbReference>
<dbReference type="STRING" id="208964.PA5481"/>
<dbReference type="PaxDb" id="208964-PA5481"/>
<dbReference type="DNASU" id="878530"/>
<dbReference type="GeneID" id="878530"/>
<dbReference type="KEGG" id="pae:PA5481"/>
<dbReference type="PATRIC" id="fig|208964.12.peg.5746"/>
<dbReference type="PseudoCAP" id="PA5481"/>
<dbReference type="HOGENOM" id="CLU_109262_1_0_6"/>
<dbReference type="InParanoid" id="Q9HT89"/>
<dbReference type="OrthoDB" id="8858386at2"/>
<dbReference type="PhylomeDB" id="Q9HT89"/>
<dbReference type="BioCyc" id="PAER208964:G1FZ6-5608-MONOMER"/>
<dbReference type="Proteomes" id="UP000002438">
    <property type="component" value="Chromosome"/>
</dbReference>
<dbReference type="GO" id="GO:0042597">
    <property type="term" value="C:periplasmic space"/>
    <property type="evidence" value="ECO:0007669"/>
    <property type="project" value="UniProtKB-SubCell"/>
</dbReference>
<dbReference type="Gene3D" id="3.40.1420.10">
    <property type="entry name" value="Inhibitor of vertebrate lysozyme"/>
    <property type="match status" value="1"/>
</dbReference>
<dbReference type="InterPro" id="IPR036501">
    <property type="entry name" value="Inhibitor_vert_lysozyme_sf"/>
</dbReference>
<dbReference type="InterPro" id="IPR014453">
    <property type="entry name" value="Inhibitor_vertebrate_lysozyme"/>
</dbReference>
<dbReference type="Pfam" id="PF08816">
    <property type="entry name" value="Ivy"/>
    <property type="match status" value="1"/>
</dbReference>
<dbReference type="PIRSF" id="PIRSF009103">
    <property type="entry name" value="Ivy"/>
    <property type="match status" value="1"/>
</dbReference>
<dbReference type="SUPFAM" id="SSF89872">
    <property type="entry name" value="Inhibitor of vertebrate lysozyme, Ivy"/>
    <property type="match status" value="1"/>
</dbReference>
<feature type="signal peptide" evidence="2">
    <location>
        <begin position="1"/>
        <end position="23"/>
    </location>
</feature>
<feature type="chain" id="PRO_0000016548" description="Uncharacterized protein PA5481">
    <location>
        <begin position="24"/>
        <end position="155"/>
    </location>
</feature>
<feature type="disulfide bond" evidence="1">
    <location>
        <begin position="86"/>
        <end position="91"/>
    </location>
</feature>
<gene>
    <name type="ordered locus">PA5481</name>
</gene>
<name>YID1_PSEAE</name>